<organism>
    <name type="scientific">Polaromonas naphthalenivorans (strain CJ2)</name>
    <dbReference type="NCBI Taxonomy" id="365044"/>
    <lineage>
        <taxon>Bacteria</taxon>
        <taxon>Pseudomonadati</taxon>
        <taxon>Pseudomonadota</taxon>
        <taxon>Betaproteobacteria</taxon>
        <taxon>Burkholderiales</taxon>
        <taxon>Comamonadaceae</taxon>
        <taxon>Polaromonas</taxon>
    </lineage>
</organism>
<comment type="function">
    <text evidence="1">An aminoacyl-tRNA editing enzyme that deacylates mischarged D-aminoacyl-tRNAs. Also deacylates mischarged glycyl-tRNA(Ala), protecting cells against glycine mischarging by AlaRS. Acts via tRNA-based rather than protein-based catalysis; rejects L-amino acids rather than detecting D-amino acids in the active site. By recycling D-aminoacyl-tRNA to D-amino acids and free tRNA molecules, this enzyme counteracts the toxicity associated with the formation of D-aminoacyl-tRNA entities in vivo and helps enforce protein L-homochirality.</text>
</comment>
<comment type="catalytic activity">
    <reaction evidence="1">
        <text>glycyl-tRNA(Ala) + H2O = tRNA(Ala) + glycine + H(+)</text>
        <dbReference type="Rhea" id="RHEA:53744"/>
        <dbReference type="Rhea" id="RHEA-COMP:9657"/>
        <dbReference type="Rhea" id="RHEA-COMP:13640"/>
        <dbReference type="ChEBI" id="CHEBI:15377"/>
        <dbReference type="ChEBI" id="CHEBI:15378"/>
        <dbReference type="ChEBI" id="CHEBI:57305"/>
        <dbReference type="ChEBI" id="CHEBI:78442"/>
        <dbReference type="ChEBI" id="CHEBI:78522"/>
        <dbReference type="EC" id="3.1.1.96"/>
    </reaction>
</comment>
<comment type="catalytic activity">
    <reaction evidence="1">
        <text>a D-aminoacyl-tRNA + H2O = a tRNA + a D-alpha-amino acid + H(+)</text>
        <dbReference type="Rhea" id="RHEA:13953"/>
        <dbReference type="Rhea" id="RHEA-COMP:10123"/>
        <dbReference type="Rhea" id="RHEA-COMP:10124"/>
        <dbReference type="ChEBI" id="CHEBI:15377"/>
        <dbReference type="ChEBI" id="CHEBI:15378"/>
        <dbReference type="ChEBI" id="CHEBI:59871"/>
        <dbReference type="ChEBI" id="CHEBI:78442"/>
        <dbReference type="ChEBI" id="CHEBI:79333"/>
        <dbReference type="EC" id="3.1.1.96"/>
    </reaction>
</comment>
<comment type="subunit">
    <text evidence="1">Homodimer.</text>
</comment>
<comment type="subcellular location">
    <subcellularLocation>
        <location evidence="1">Cytoplasm</location>
    </subcellularLocation>
</comment>
<comment type="domain">
    <text evidence="1">A Gly-cisPro motif from one monomer fits into the active site of the other monomer to allow specific chiral rejection of L-amino acids.</text>
</comment>
<comment type="similarity">
    <text evidence="1">Belongs to the DTD family.</text>
</comment>
<name>DTD_POLNA</name>
<protein>
    <recommendedName>
        <fullName evidence="1">D-aminoacyl-tRNA deacylase</fullName>
        <shortName evidence="1">DTD</shortName>
        <ecNumber evidence="1">3.1.1.96</ecNumber>
    </recommendedName>
    <alternativeName>
        <fullName evidence="1">Gly-tRNA(Ala) deacylase</fullName>
    </alternativeName>
</protein>
<feature type="chain" id="PRO_1000050867" description="D-aminoacyl-tRNA deacylase">
    <location>
        <begin position="1"/>
        <end position="154"/>
    </location>
</feature>
<feature type="short sequence motif" description="Gly-cisPro motif, important for rejection of L-amino acids" evidence="1">
    <location>
        <begin position="142"/>
        <end position="143"/>
    </location>
</feature>
<gene>
    <name evidence="1" type="primary">dtd</name>
    <name type="ordered locus">Pnap_0507</name>
</gene>
<keyword id="KW-0963">Cytoplasm</keyword>
<keyword id="KW-0378">Hydrolase</keyword>
<keyword id="KW-1185">Reference proteome</keyword>
<keyword id="KW-0694">RNA-binding</keyword>
<keyword id="KW-0820">tRNA-binding</keyword>
<dbReference type="EC" id="3.1.1.96" evidence="1"/>
<dbReference type="EMBL" id="CP000529">
    <property type="protein sequence ID" value="ABM35828.1"/>
    <property type="molecule type" value="Genomic_DNA"/>
</dbReference>
<dbReference type="RefSeq" id="WP_011799928.1">
    <property type="nucleotide sequence ID" value="NC_008781.1"/>
</dbReference>
<dbReference type="SMR" id="A1VJK0"/>
<dbReference type="STRING" id="365044.Pnap_0507"/>
<dbReference type="KEGG" id="pna:Pnap_0507"/>
<dbReference type="eggNOG" id="COG1490">
    <property type="taxonomic scope" value="Bacteria"/>
</dbReference>
<dbReference type="HOGENOM" id="CLU_076901_1_1_4"/>
<dbReference type="OrthoDB" id="9801395at2"/>
<dbReference type="Proteomes" id="UP000000644">
    <property type="component" value="Chromosome"/>
</dbReference>
<dbReference type="GO" id="GO:0005737">
    <property type="term" value="C:cytoplasm"/>
    <property type="evidence" value="ECO:0007669"/>
    <property type="project" value="UniProtKB-SubCell"/>
</dbReference>
<dbReference type="GO" id="GO:0051500">
    <property type="term" value="F:D-tyrosyl-tRNA(Tyr) deacylase activity"/>
    <property type="evidence" value="ECO:0007669"/>
    <property type="project" value="TreeGrafter"/>
</dbReference>
<dbReference type="GO" id="GO:0106026">
    <property type="term" value="F:Gly-tRNA(Ala) deacylase activity"/>
    <property type="evidence" value="ECO:0007669"/>
    <property type="project" value="UniProtKB-UniRule"/>
</dbReference>
<dbReference type="GO" id="GO:0043908">
    <property type="term" value="F:Ser(Gly)-tRNA(Ala) hydrolase activity"/>
    <property type="evidence" value="ECO:0007669"/>
    <property type="project" value="UniProtKB-UniRule"/>
</dbReference>
<dbReference type="GO" id="GO:0000049">
    <property type="term" value="F:tRNA binding"/>
    <property type="evidence" value="ECO:0007669"/>
    <property type="project" value="UniProtKB-UniRule"/>
</dbReference>
<dbReference type="GO" id="GO:0019478">
    <property type="term" value="P:D-amino acid catabolic process"/>
    <property type="evidence" value="ECO:0007669"/>
    <property type="project" value="UniProtKB-UniRule"/>
</dbReference>
<dbReference type="CDD" id="cd00563">
    <property type="entry name" value="Dtyr_deacylase"/>
    <property type="match status" value="1"/>
</dbReference>
<dbReference type="FunFam" id="3.50.80.10:FF:000001">
    <property type="entry name" value="D-aminoacyl-tRNA deacylase"/>
    <property type="match status" value="1"/>
</dbReference>
<dbReference type="Gene3D" id="3.50.80.10">
    <property type="entry name" value="D-tyrosyl-tRNA(Tyr) deacylase"/>
    <property type="match status" value="1"/>
</dbReference>
<dbReference type="HAMAP" id="MF_00518">
    <property type="entry name" value="Deacylase_Dtd"/>
    <property type="match status" value="1"/>
</dbReference>
<dbReference type="InterPro" id="IPR003732">
    <property type="entry name" value="Daa-tRNA_deacyls_DTD"/>
</dbReference>
<dbReference type="InterPro" id="IPR023509">
    <property type="entry name" value="DTD-like_sf"/>
</dbReference>
<dbReference type="NCBIfam" id="TIGR00256">
    <property type="entry name" value="D-aminoacyl-tRNA deacylase"/>
    <property type="match status" value="1"/>
</dbReference>
<dbReference type="PANTHER" id="PTHR10472:SF5">
    <property type="entry name" value="D-AMINOACYL-TRNA DEACYLASE 1"/>
    <property type="match status" value="1"/>
</dbReference>
<dbReference type="PANTHER" id="PTHR10472">
    <property type="entry name" value="D-TYROSYL-TRNA TYR DEACYLASE"/>
    <property type="match status" value="1"/>
</dbReference>
<dbReference type="Pfam" id="PF02580">
    <property type="entry name" value="Tyr_Deacylase"/>
    <property type="match status" value="1"/>
</dbReference>
<dbReference type="SUPFAM" id="SSF69500">
    <property type="entry name" value="DTD-like"/>
    <property type="match status" value="1"/>
</dbReference>
<reference key="1">
    <citation type="journal article" date="2009" name="Environ. Microbiol.">
        <title>The genome of Polaromonas naphthalenivorans strain CJ2, isolated from coal tar-contaminated sediment, reveals physiological and metabolic versatility and evolution through extensive horizontal gene transfer.</title>
        <authorList>
            <person name="Yagi J.M."/>
            <person name="Sims D."/>
            <person name="Brettin T."/>
            <person name="Bruce D."/>
            <person name="Madsen E.L."/>
        </authorList>
    </citation>
    <scope>NUCLEOTIDE SEQUENCE [LARGE SCALE GENOMIC DNA]</scope>
    <source>
        <strain>CJ2</strain>
    </source>
</reference>
<proteinExistence type="inferred from homology"/>
<evidence type="ECO:0000255" key="1">
    <source>
        <dbReference type="HAMAP-Rule" id="MF_00518"/>
    </source>
</evidence>
<sequence>MKAVLQRVAEARVVVAGETVGRIGQGLLVLVCAERGDSEAQADKLLAKILKLRIFSDDAGKMNRSVQDLDGQGACGGLLVVSQFTLAADASGGNRPSFTGAAPPDVGRRLYDYFVAQARKLHPQVETGQFAADMQVHLVNDGPVTIPLHIAPDA</sequence>
<accession>A1VJK0</accession>